<keyword id="KW-0150">Chloroplast</keyword>
<keyword id="KW-0249">Electron transport</keyword>
<keyword id="KW-0349">Heme</keyword>
<keyword id="KW-0408">Iron</keyword>
<keyword id="KW-0472">Membrane</keyword>
<keyword id="KW-0479">Metal-binding</keyword>
<keyword id="KW-0602">Photosynthesis</keyword>
<keyword id="KW-0934">Plastid</keyword>
<keyword id="KW-0732">Signal</keyword>
<keyword id="KW-0793">Thylakoid</keyword>
<keyword id="KW-0812">Transmembrane</keyword>
<keyword id="KW-1133">Transmembrane helix</keyword>
<keyword id="KW-0813">Transport</keyword>
<reference key="1">
    <citation type="journal article" date="1988" name="J. Mol. Biol.">
        <title>Structure and organization of Marchantia polymorpha chloroplast genome. III. Gene organization of the large single copy region from rbcL to trnI(CAU).</title>
        <authorList>
            <person name="Fukuzawa H."/>
            <person name="Kohchi T."/>
            <person name="Sano T."/>
            <person name="Shirai H."/>
            <person name="Umesono K."/>
            <person name="Inokuchi H."/>
            <person name="Ozeki H."/>
            <person name="Ohyama K."/>
        </authorList>
    </citation>
    <scope>NUCLEOTIDE SEQUENCE [GENOMIC DNA]</scope>
</reference>
<reference key="2">
    <citation type="journal article" date="1986" name="Nature">
        <title>Chloroplast gene organization deduced from complete sequence of liverwort Marchantia polymorpha chloroplast DNA.</title>
        <authorList>
            <person name="Ohyama K."/>
            <person name="Fukuzawa H."/>
            <person name="Kohchi T."/>
            <person name="Shirai H."/>
            <person name="Sano T."/>
            <person name="Sano S."/>
            <person name="Umesono K."/>
            <person name="Shiki Y."/>
            <person name="Takeuchi M."/>
            <person name="Chang Z."/>
            <person name="Aota S."/>
            <person name="Inokuchi H."/>
            <person name="Ozeki H."/>
        </authorList>
    </citation>
    <scope>NUCLEOTIDE SEQUENCE [LARGE SCALE GENOMIC DNA]</scope>
</reference>
<accession>P06246</accession>
<gene>
    <name type="primary">petA</name>
</gene>
<evidence type="ECO:0000250" key="1"/>
<evidence type="ECO:0000255" key="2"/>
<evidence type="ECO:0000305" key="3"/>
<comment type="function">
    <text evidence="1">Component of the cytochrome b6-f complex, which mediates electron transfer between photosystem II (PSII) and photosystem I (PSI), cyclic electron flow around PSI, and state transitions.</text>
</comment>
<comment type="cofactor">
    <cofactor evidence="1">
        <name>heme</name>
        <dbReference type="ChEBI" id="CHEBI:30413"/>
    </cofactor>
    <text evidence="1">Binds 1 heme group covalently.</text>
</comment>
<comment type="subunit">
    <text evidence="1">The 4 large subunits of the cytochrome b6-f complex are cytochrome b6, subunit IV (17 kDa polypeptide, petD), cytochrome f and the Rieske protein, while the 4 small subunits are PetG, PetL, PetM and PetN. The complex functions as a dimer (By similarity).</text>
</comment>
<comment type="subcellular location">
    <subcellularLocation>
        <location evidence="1">Plastid</location>
        <location evidence="1">Chloroplast thylakoid membrane</location>
        <topology evidence="1">Single-pass membrane protein</topology>
    </subcellularLocation>
</comment>
<comment type="similarity">
    <text evidence="3">Belongs to the cytochrome f family.</text>
</comment>
<name>CYF_MARPO</name>
<organism>
    <name type="scientific">Marchantia polymorpha</name>
    <name type="common">Common liverwort</name>
    <name type="synonym">Marchantia aquatica</name>
    <dbReference type="NCBI Taxonomy" id="3197"/>
    <lineage>
        <taxon>Eukaryota</taxon>
        <taxon>Viridiplantae</taxon>
        <taxon>Streptophyta</taxon>
        <taxon>Embryophyta</taxon>
        <taxon>Marchantiophyta</taxon>
        <taxon>Marchantiopsida</taxon>
        <taxon>Marchantiidae</taxon>
        <taxon>Marchantiales</taxon>
        <taxon>Marchantiaceae</taxon>
        <taxon>Marchantia</taxon>
    </lineage>
</organism>
<dbReference type="EMBL" id="X04465">
    <property type="protein sequence ID" value="CAA28097.1"/>
    <property type="molecule type" value="Genomic_DNA"/>
</dbReference>
<dbReference type="PIR" id="S01534">
    <property type="entry name" value="CFLV"/>
</dbReference>
<dbReference type="RefSeq" id="NP_039311.1">
    <property type="nucleotide sequence ID" value="NC_001319.1"/>
</dbReference>
<dbReference type="SMR" id="P06246"/>
<dbReference type="GeneID" id="2702555"/>
<dbReference type="GO" id="GO:0009535">
    <property type="term" value="C:chloroplast thylakoid membrane"/>
    <property type="evidence" value="ECO:0007669"/>
    <property type="project" value="UniProtKB-SubCell"/>
</dbReference>
<dbReference type="GO" id="GO:0009055">
    <property type="term" value="F:electron transfer activity"/>
    <property type="evidence" value="ECO:0007669"/>
    <property type="project" value="UniProtKB-UniRule"/>
</dbReference>
<dbReference type="GO" id="GO:0020037">
    <property type="term" value="F:heme binding"/>
    <property type="evidence" value="ECO:0007669"/>
    <property type="project" value="InterPro"/>
</dbReference>
<dbReference type="GO" id="GO:0005506">
    <property type="term" value="F:iron ion binding"/>
    <property type="evidence" value="ECO:0007669"/>
    <property type="project" value="InterPro"/>
</dbReference>
<dbReference type="GO" id="GO:0015979">
    <property type="term" value="P:photosynthesis"/>
    <property type="evidence" value="ECO:0007669"/>
    <property type="project" value="UniProtKB-UniRule"/>
</dbReference>
<dbReference type="FunFam" id="1.20.5.700:FF:000001">
    <property type="entry name" value="Cytochrome f"/>
    <property type="match status" value="1"/>
</dbReference>
<dbReference type="FunFam" id="2.40.50.100:FF:000007">
    <property type="entry name" value="Cytochrome f"/>
    <property type="match status" value="1"/>
</dbReference>
<dbReference type="FunFam" id="2.60.40.830:FF:000001">
    <property type="entry name" value="Cytochrome f"/>
    <property type="match status" value="1"/>
</dbReference>
<dbReference type="Gene3D" id="2.40.50.100">
    <property type="match status" value="1"/>
</dbReference>
<dbReference type="Gene3D" id="2.60.40.830">
    <property type="entry name" value="Cytochrome f large domain"/>
    <property type="match status" value="1"/>
</dbReference>
<dbReference type="Gene3D" id="1.20.5.700">
    <property type="entry name" value="Single helix bin"/>
    <property type="match status" value="1"/>
</dbReference>
<dbReference type="HAMAP" id="MF_00610">
    <property type="entry name" value="Cytb6_f_cytF"/>
    <property type="match status" value="1"/>
</dbReference>
<dbReference type="InterPro" id="IPR024058">
    <property type="entry name" value="Cyt-f_TM"/>
</dbReference>
<dbReference type="InterPro" id="IPR002325">
    <property type="entry name" value="Cyt_f"/>
</dbReference>
<dbReference type="InterPro" id="IPR024094">
    <property type="entry name" value="Cyt_f_lg_dom"/>
</dbReference>
<dbReference type="InterPro" id="IPR036826">
    <property type="entry name" value="Cyt_f_lg_dom_sf"/>
</dbReference>
<dbReference type="InterPro" id="IPR011054">
    <property type="entry name" value="Rudment_hybrid_motif"/>
</dbReference>
<dbReference type="PANTHER" id="PTHR33288">
    <property type="match status" value="1"/>
</dbReference>
<dbReference type="PANTHER" id="PTHR33288:SF10">
    <property type="entry name" value="CYTOCHROME F"/>
    <property type="match status" value="1"/>
</dbReference>
<dbReference type="Pfam" id="PF01333">
    <property type="entry name" value="Apocytochr_F_C"/>
    <property type="match status" value="1"/>
</dbReference>
<dbReference type="Pfam" id="PF16639">
    <property type="entry name" value="Apocytochr_F_N"/>
    <property type="match status" value="1"/>
</dbReference>
<dbReference type="PRINTS" id="PR00610">
    <property type="entry name" value="CYTOCHROMEF"/>
</dbReference>
<dbReference type="SUPFAM" id="SSF103431">
    <property type="entry name" value="Cytochrome f subunit of the cytochrome b6f complex, transmembrane anchor"/>
    <property type="match status" value="1"/>
</dbReference>
<dbReference type="SUPFAM" id="SSF49441">
    <property type="entry name" value="Cytochrome f, large domain"/>
    <property type="match status" value="1"/>
</dbReference>
<dbReference type="SUPFAM" id="SSF51246">
    <property type="entry name" value="Rudiment single hybrid motif"/>
    <property type="match status" value="1"/>
</dbReference>
<dbReference type="PROSITE" id="PS51010">
    <property type="entry name" value="CYTF"/>
    <property type="match status" value="1"/>
</dbReference>
<feature type="signal peptide" evidence="1">
    <location>
        <begin position="1"/>
        <end position="35"/>
    </location>
</feature>
<feature type="chain" id="PRO_0000023819" description="Cytochrome f">
    <location>
        <begin position="36"/>
        <end position="320"/>
    </location>
</feature>
<feature type="transmembrane region" description="Helical" evidence="2">
    <location>
        <begin position="286"/>
        <end position="305"/>
    </location>
</feature>
<feature type="binding site" description="axial binding residue" evidence="1">
    <location>
        <position position="36"/>
    </location>
    <ligand>
        <name>heme</name>
        <dbReference type="ChEBI" id="CHEBI:30413"/>
    </ligand>
    <ligandPart>
        <name>Fe</name>
        <dbReference type="ChEBI" id="CHEBI:18248"/>
    </ligandPart>
</feature>
<feature type="binding site" description="covalent" evidence="1">
    <location>
        <position position="56"/>
    </location>
    <ligand>
        <name>heme</name>
        <dbReference type="ChEBI" id="CHEBI:30413"/>
    </ligand>
</feature>
<feature type="binding site" description="covalent" evidence="1">
    <location>
        <position position="59"/>
    </location>
    <ligand>
        <name>heme</name>
        <dbReference type="ChEBI" id="CHEBI:30413"/>
    </ligand>
</feature>
<feature type="binding site" description="axial binding residue" evidence="1">
    <location>
        <position position="60"/>
    </location>
    <ligand>
        <name>heme</name>
        <dbReference type="ChEBI" id="CHEBI:30413"/>
    </ligand>
    <ligandPart>
        <name>Fe</name>
        <dbReference type="ChEBI" id="CHEBI:18248"/>
    </ligandPart>
</feature>
<proteinExistence type="inferred from homology"/>
<sequence length="320" mass="35431">MQNRNFNNLIIKWAIRLISIMIIINTIFWSSISEAFPIYAQQGYENPREATGRIVCANCHLAKKPVDIEVPQSVLPNTVFEAVVKIPYDMQIKQVLANGKKGSLNVGAVLILPEGFELAPSDRIPPEMKEKIGNLFFQPYSNDKKNILVIGPVPGKKYSEMVFPILSPDPATNKEAHFLKYPIYVGGNRGRGQIYPDGSKSNNTVYNASITGKVSKIFRKEKGGYEITIDDISDGHKVVDISAAGPELIISEGELVKVDQPLTNNPNVGGFGQGDAEVVLQDPLRIQGLLLFFGSVILAQIFLVLKKKQFEKVQLAEMNF</sequence>
<protein>
    <recommendedName>
        <fullName>Cytochrome f</fullName>
    </recommendedName>
</protein>
<geneLocation type="chloroplast"/>